<evidence type="ECO:0000255" key="1">
    <source>
        <dbReference type="HAMAP-Rule" id="MF_00111"/>
    </source>
</evidence>
<organism>
    <name type="scientific">Chlamydia abortus (strain DSM 27085 / S26/3)</name>
    <name type="common">Chlamydophila abortus</name>
    <dbReference type="NCBI Taxonomy" id="218497"/>
    <lineage>
        <taxon>Bacteria</taxon>
        <taxon>Pseudomonadati</taxon>
        <taxon>Chlamydiota</taxon>
        <taxon>Chlamydiia</taxon>
        <taxon>Chlamydiales</taxon>
        <taxon>Chlamydiaceae</taxon>
        <taxon>Chlamydia/Chlamydophila group</taxon>
        <taxon>Chlamydia</taxon>
    </lineage>
</organism>
<protein>
    <recommendedName>
        <fullName evidence="1">UDP-N-acetylglucosamine 1-carboxyvinyltransferase</fullName>
        <ecNumber evidence="1">2.5.1.7</ecNumber>
    </recommendedName>
    <alternativeName>
        <fullName evidence="1">Enoylpyruvate transferase</fullName>
    </alternativeName>
    <alternativeName>
        <fullName evidence="1">UDP-N-acetylglucosamine enolpyruvyl transferase</fullName>
        <shortName evidence="1">EPT</shortName>
    </alternativeName>
</protein>
<dbReference type="EC" id="2.5.1.7" evidence="1"/>
<dbReference type="EMBL" id="CR848038">
    <property type="protein sequence ID" value="CAH63626.1"/>
    <property type="molecule type" value="Genomic_DNA"/>
</dbReference>
<dbReference type="RefSeq" id="WP_011096874.1">
    <property type="nucleotide sequence ID" value="NC_004552.2"/>
</dbReference>
<dbReference type="SMR" id="Q5L6U5"/>
<dbReference type="KEGG" id="cab:CAB168"/>
<dbReference type="eggNOG" id="COG0766">
    <property type="taxonomic scope" value="Bacteria"/>
</dbReference>
<dbReference type="HOGENOM" id="CLU_027387_0_0_0"/>
<dbReference type="OrthoDB" id="9803760at2"/>
<dbReference type="UniPathway" id="UPA00219"/>
<dbReference type="Proteomes" id="UP000001012">
    <property type="component" value="Chromosome"/>
</dbReference>
<dbReference type="GO" id="GO:0005737">
    <property type="term" value="C:cytoplasm"/>
    <property type="evidence" value="ECO:0007669"/>
    <property type="project" value="UniProtKB-SubCell"/>
</dbReference>
<dbReference type="GO" id="GO:0008760">
    <property type="term" value="F:UDP-N-acetylglucosamine 1-carboxyvinyltransferase activity"/>
    <property type="evidence" value="ECO:0007669"/>
    <property type="project" value="UniProtKB-UniRule"/>
</dbReference>
<dbReference type="GO" id="GO:0051301">
    <property type="term" value="P:cell division"/>
    <property type="evidence" value="ECO:0007669"/>
    <property type="project" value="UniProtKB-KW"/>
</dbReference>
<dbReference type="GO" id="GO:0071555">
    <property type="term" value="P:cell wall organization"/>
    <property type="evidence" value="ECO:0007669"/>
    <property type="project" value="UniProtKB-KW"/>
</dbReference>
<dbReference type="GO" id="GO:0009252">
    <property type="term" value="P:peptidoglycan biosynthetic process"/>
    <property type="evidence" value="ECO:0007669"/>
    <property type="project" value="UniProtKB-UniRule"/>
</dbReference>
<dbReference type="GO" id="GO:0008360">
    <property type="term" value="P:regulation of cell shape"/>
    <property type="evidence" value="ECO:0007669"/>
    <property type="project" value="UniProtKB-KW"/>
</dbReference>
<dbReference type="GO" id="GO:0019277">
    <property type="term" value="P:UDP-N-acetylgalactosamine biosynthetic process"/>
    <property type="evidence" value="ECO:0007669"/>
    <property type="project" value="InterPro"/>
</dbReference>
<dbReference type="CDD" id="cd01555">
    <property type="entry name" value="UdpNAET"/>
    <property type="match status" value="1"/>
</dbReference>
<dbReference type="Gene3D" id="3.65.10.10">
    <property type="entry name" value="Enolpyruvate transferase domain"/>
    <property type="match status" value="2"/>
</dbReference>
<dbReference type="HAMAP" id="MF_00111">
    <property type="entry name" value="MurA"/>
    <property type="match status" value="1"/>
</dbReference>
<dbReference type="InterPro" id="IPR001986">
    <property type="entry name" value="Enolpyruvate_Tfrase_dom"/>
</dbReference>
<dbReference type="InterPro" id="IPR036968">
    <property type="entry name" value="Enolpyruvate_Tfrase_sf"/>
</dbReference>
<dbReference type="InterPro" id="IPR050068">
    <property type="entry name" value="MurA_subfamily"/>
</dbReference>
<dbReference type="InterPro" id="IPR013792">
    <property type="entry name" value="RNA3'P_cycl/enolpyr_Trfase_a/b"/>
</dbReference>
<dbReference type="InterPro" id="IPR005750">
    <property type="entry name" value="UDP_GlcNAc_COvinyl_MurA"/>
</dbReference>
<dbReference type="NCBIfam" id="TIGR01072">
    <property type="entry name" value="murA"/>
    <property type="match status" value="1"/>
</dbReference>
<dbReference type="NCBIfam" id="NF006873">
    <property type="entry name" value="PRK09369.1"/>
    <property type="match status" value="1"/>
</dbReference>
<dbReference type="PANTHER" id="PTHR43783">
    <property type="entry name" value="UDP-N-ACETYLGLUCOSAMINE 1-CARBOXYVINYLTRANSFERASE"/>
    <property type="match status" value="1"/>
</dbReference>
<dbReference type="PANTHER" id="PTHR43783:SF1">
    <property type="entry name" value="UDP-N-ACETYLGLUCOSAMINE 1-CARBOXYVINYLTRANSFERASE"/>
    <property type="match status" value="1"/>
</dbReference>
<dbReference type="Pfam" id="PF00275">
    <property type="entry name" value="EPSP_synthase"/>
    <property type="match status" value="1"/>
</dbReference>
<dbReference type="SUPFAM" id="SSF55205">
    <property type="entry name" value="EPT/RTPC-like"/>
    <property type="match status" value="1"/>
</dbReference>
<sequence>MAAAEVFGGCVLEGSVRVSGAKNSTTKLLVASLLSDRKCVLRNVPDIGDVRLTVELCRSLGSIVHWDKQAEVIEIHTPEIHMSEVSAQFSRVNRIPILLLGALLARCPEGVVVPCVGGDAIGERTLNFHFEGLEQLGAKVAYDGHGYQAAAPKGLIGAYITLPYPSVGATENLILASVRAQGRTIIKNAALEVEILDLILFLQKAGVEITTDNDRTIEIFGCEDFYEVDHWVIPDKIEAASFGMAAVLTGGRVFVENAEQHLMIPFLKTLRSIGGGFSVTETGIEFFYNEPLKGGVVLETDVHPGFLTDWQQPFSVLLSQAEGSSVIHETVHENRLGYLRGLQKMGANCELFYQCLSSKACRYATGNFPHSAIIHGVTPLKASQLVIPDLRAGFAYIMAALIAEGGPSLIKNTQLLDRGYYNWVDKLNSLGAKIHLLSLDPVAF</sequence>
<proteinExistence type="inferred from homology"/>
<comment type="function">
    <text evidence="1">Cell wall formation. Adds enolpyruvyl to UDP-N-acetylglucosamine.</text>
</comment>
<comment type="catalytic activity">
    <reaction evidence="1">
        <text>phosphoenolpyruvate + UDP-N-acetyl-alpha-D-glucosamine = UDP-N-acetyl-3-O-(1-carboxyvinyl)-alpha-D-glucosamine + phosphate</text>
        <dbReference type="Rhea" id="RHEA:18681"/>
        <dbReference type="ChEBI" id="CHEBI:43474"/>
        <dbReference type="ChEBI" id="CHEBI:57705"/>
        <dbReference type="ChEBI" id="CHEBI:58702"/>
        <dbReference type="ChEBI" id="CHEBI:68483"/>
        <dbReference type="EC" id="2.5.1.7"/>
    </reaction>
</comment>
<comment type="pathway">
    <text evidence="1">Cell wall biogenesis; peptidoglycan biosynthesis.</text>
</comment>
<comment type="subcellular location">
    <subcellularLocation>
        <location evidence="1">Cytoplasm</location>
    </subcellularLocation>
</comment>
<comment type="similarity">
    <text evidence="1">Belongs to the EPSP synthase family. MurA subfamily.</text>
</comment>
<keyword id="KW-0131">Cell cycle</keyword>
<keyword id="KW-0132">Cell division</keyword>
<keyword id="KW-0133">Cell shape</keyword>
<keyword id="KW-0961">Cell wall biogenesis/degradation</keyword>
<keyword id="KW-0963">Cytoplasm</keyword>
<keyword id="KW-0573">Peptidoglycan synthesis</keyword>
<keyword id="KW-0808">Transferase</keyword>
<name>MURA_CHLAB</name>
<reference key="1">
    <citation type="journal article" date="2005" name="Genome Res.">
        <title>The Chlamydophila abortus genome sequence reveals an array of variable proteins that contribute to interspecies variation.</title>
        <authorList>
            <person name="Thomson N.R."/>
            <person name="Yeats C."/>
            <person name="Bell K."/>
            <person name="Holden M.T.G."/>
            <person name="Bentley S.D."/>
            <person name="Livingstone M."/>
            <person name="Cerdeno-Tarraga A.-M."/>
            <person name="Harris B."/>
            <person name="Doggett J."/>
            <person name="Ormond D."/>
            <person name="Mungall K."/>
            <person name="Clarke K."/>
            <person name="Feltwell T."/>
            <person name="Hance Z."/>
            <person name="Sanders M."/>
            <person name="Quail M.A."/>
            <person name="Price C."/>
            <person name="Barrell B.G."/>
            <person name="Parkhill J."/>
            <person name="Longbottom D."/>
        </authorList>
    </citation>
    <scope>NUCLEOTIDE SEQUENCE [LARGE SCALE GENOMIC DNA]</scope>
    <source>
        <strain>DSM 27085 / S26/3</strain>
    </source>
</reference>
<accession>Q5L6U5</accession>
<feature type="chain" id="PRO_0000231188" description="UDP-N-acetylglucosamine 1-carboxyvinyltransferase">
    <location>
        <begin position="1"/>
        <end position="444"/>
    </location>
</feature>
<feature type="active site" description="Proton donor" evidence="1">
    <location>
        <position position="119"/>
    </location>
</feature>
<feature type="binding site" evidence="1">
    <location>
        <begin position="22"/>
        <end position="23"/>
    </location>
    <ligand>
        <name>phosphoenolpyruvate</name>
        <dbReference type="ChEBI" id="CHEBI:58702"/>
    </ligand>
</feature>
<feature type="binding site" evidence="1">
    <location>
        <position position="94"/>
    </location>
    <ligand>
        <name>UDP-N-acetyl-alpha-D-glucosamine</name>
        <dbReference type="ChEBI" id="CHEBI:57705"/>
    </ligand>
</feature>
<feature type="binding site" evidence="1">
    <location>
        <position position="309"/>
    </location>
    <ligand>
        <name>UDP-N-acetyl-alpha-D-glucosamine</name>
        <dbReference type="ChEBI" id="CHEBI:57705"/>
    </ligand>
</feature>
<feature type="binding site" evidence="1">
    <location>
        <position position="331"/>
    </location>
    <ligand>
        <name>UDP-N-acetyl-alpha-D-glucosamine</name>
        <dbReference type="ChEBI" id="CHEBI:57705"/>
    </ligand>
</feature>
<gene>
    <name evidence="1" type="primary">murA</name>
    <name type="ordered locus">CAB168</name>
</gene>